<proteinExistence type="predicted"/>
<dbReference type="EMBL" id="AF303741">
    <property type="protein sequence ID" value="AAK82116.1"/>
    <property type="molecule type" value="Genomic_DNA"/>
</dbReference>
<dbReference type="RefSeq" id="NP_149718.1">
    <property type="nucleotide sequence ID" value="NC_003038.1"/>
</dbReference>
<dbReference type="SMR" id="Q91FR7"/>
<dbReference type="KEGG" id="vg:1733305"/>
<dbReference type="Proteomes" id="UP000001359">
    <property type="component" value="Genome"/>
</dbReference>
<gene>
    <name type="ORF">IIV6-255L</name>
</gene>
<sequence length="59" mass="6856">MVLTNLQKITGLLCVLVETKKLKIFIKFMLKTKNGGKKVLKKIYKKAKKKNILTMIMFI</sequence>
<organismHost>
    <name type="scientific">Acheta domesticus</name>
    <name type="common">House cricket</name>
    <dbReference type="NCBI Taxonomy" id="6997"/>
</organismHost>
<organismHost>
    <name type="scientific">Chilo suppressalis</name>
    <name type="common">Asiatic rice borer moth</name>
    <dbReference type="NCBI Taxonomy" id="168631"/>
</organismHost>
<organismHost>
    <name type="scientific">Gryllus bimaculatus</name>
    <name type="common">Two-spotted cricket</name>
    <dbReference type="NCBI Taxonomy" id="6999"/>
</organismHost>
<organismHost>
    <name type="scientific">Gryllus campestris</name>
    <dbReference type="NCBI Taxonomy" id="58607"/>
</organismHost>
<organismHost>
    <name type="scientific">Spodoptera frugiperda</name>
    <name type="common">Fall armyworm</name>
    <dbReference type="NCBI Taxonomy" id="7108"/>
</organismHost>
<protein>
    <recommendedName>
        <fullName>Uncharacterized protein 255L</fullName>
    </recommendedName>
</protein>
<organism>
    <name type="scientific">Invertebrate iridescent virus 6</name>
    <name type="common">IIV-6</name>
    <name type="synonym">Chilo iridescent virus</name>
    <dbReference type="NCBI Taxonomy" id="176652"/>
    <lineage>
        <taxon>Viruses</taxon>
        <taxon>Varidnaviria</taxon>
        <taxon>Bamfordvirae</taxon>
        <taxon>Nucleocytoviricota</taxon>
        <taxon>Megaviricetes</taxon>
        <taxon>Pimascovirales</taxon>
        <taxon>Iridoviridae</taxon>
        <taxon>Betairidovirinae</taxon>
        <taxon>Iridovirus</taxon>
    </lineage>
</organism>
<reference key="1">
    <citation type="journal article" date="2001" name="Virology">
        <title>Analysis of the first complete DNA sequence of an invertebrate iridovirus: coding strategy of the genome of Chilo iridescent virus.</title>
        <authorList>
            <person name="Jakob N.J."/>
            <person name="Mueller K."/>
            <person name="Bahr U."/>
            <person name="Darai G."/>
        </authorList>
    </citation>
    <scope>NUCLEOTIDE SEQUENCE [LARGE SCALE GENOMIC DNA]</scope>
</reference>
<reference key="2">
    <citation type="journal article" date="2007" name="Virol. J.">
        <title>Comparative genomic analysis of the family Iridoviridae: re-annotating and defining the core set of iridovirus genes.</title>
        <authorList>
            <person name="Eaton H.E."/>
            <person name="Metcalf J."/>
            <person name="Penny E."/>
            <person name="Tcherepanov V."/>
            <person name="Upton C."/>
            <person name="Brunetti C.R."/>
        </authorList>
    </citation>
    <scope>GENOME REANNOTATION</scope>
</reference>
<accession>Q91FR7</accession>
<feature type="chain" id="PRO_0000377835" description="Uncharacterized protein 255L">
    <location>
        <begin position="1"/>
        <end position="59"/>
    </location>
</feature>
<name>255L_IIV6</name>
<keyword id="KW-1185">Reference proteome</keyword>